<dbReference type="EMBL" id="AF323924">
    <property type="protein sequence ID" value="AAK11599.1"/>
    <property type="molecule type" value="mRNA"/>
</dbReference>
<dbReference type="EMBL" id="AF307137">
    <property type="protein sequence ID" value="AAG28784.1"/>
    <property type="molecule type" value="mRNA"/>
</dbReference>
<dbReference type="EMBL" id="AF454953">
    <property type="protein sequence ID" value="AAL51079.1"/>
    <property type="molecule type" value="mRNA"/>
</dbReference>
<dbReference type="EMBL" id="BC006287">
    <property type="protein sequence ID" value="AAH06287.1"/>
    <property type="molecule type" value="mRNA"/>
</dbReference>
<dbReference type="EMBL" id="BC051823">
    <property type="protein sequence ID" value="AAH51823.1"/>
    <property type="molecule type" value="mRNA"/>
</dbReference>
<dbReference type="EMBL" id="AF181265">
    <property type="protein sequence ID" value="AAF40472.1"/>
    <property type="molecule type" value="mRNA"/>
</dbReference>
<dbReference type="CCDS" id="CCDS10081.1"/>
<dbReference type="RefSeq" id="NP_644670.1">
    <property type="nucleotide sequence ID" value="NM_139265.4"/>
</dbReference>
<dbReference type="SMR" id="Q9H223"/>
<dbReference type="BioGRID" id="119054">
    <property type="interactions" value="132"/>
</dbReference>
<dbReference type="FunCoup" id="Q9H223">
    <property type="interactions" value="2676"/>
</dbReference>
<dbReference type="IntAct" id="Q9H223">
    <property type="interactions" value="78"/>
</dbReference>
<dbReference type="MINT" id="Q9H223"/>
<dbReference type="STRING" id="9606.ENSP00000220325"/>
<dbReference type="GlyGen" id="Q9H223">
    <property type="glycosylation" value="1 site, 1 O-linked glycan (1 site)"/>
</dbReference>
<dbReference type="iPTMnet" id="Q9H223"/>
<dbReference type="MetOSite" id="Q9H223"/>
<dbReference type="PhosphoSitePlus" id="Q9H223"/>
<dbReference type="SwissPalm" id="Q9H223"/>
<dbReference type="BioMuta" id="EHD4"/>
<dbReference type="DMDM" id="18202935"/>
<dbReference type="jPOST" id="Q9H223"/>
<dbReference type="MassIVE" id="Q9H223"/>
<dbReference type="PaxDb" id="9606-ENSP00000220325"/>
<dbReference type="PeptideAtlas" id="Q9H223"/>
<dbReference type="ProteomicsDB" id="80476"/>
<dbReference type="Pumba" id="Q9H223"/>
<dbReference type="Antibodypedia" id="23470">
    <property type="antibodies" value="155 antibodies from 29 providers"/>
</dbReference>
<dbReference type="DNASU" id="30844"/>
<dbReference type="Ensembl" id="ENST00000220325.9">
    <property type="protein sequence ID" value="ENSP00000220325.4"/>
    <property type="gene ID" value="ENSG00000103966.11"/>
</dbReference>
<dbReference type="GeneID" id="30844"/>
<dbReference type="KEGG" id="hsa:30844"/>
<dbReference type="MANE-Select" id="ENST00000220325.9">
    <property type="protein sequence ID" value="ENSP00000220325.4"/>
    <property type="RefSeq nucleotide sequence ID" value="NM_139265.4"/>
    <property type="RefSeq protein sequence ID" value="NP_644670.1"/>
</dbReference>
<dbReference type="UCSC" id="uc001zot.4">
    <property type="organism name" value="human"/>
</dbReference>
<dbReference type="AGR" id="HGNC:3245"/>
<dbReference type="CTD" id="30844"/>
<dbReference type="DisGeNET" id="30844"/>
<dbReference type="GeneCards" id="EHD4"/>
<dbReference type="HGNC" id="HGNC:3245">
    <property type="gene designation" value="EHD4"/>
</dbReference>
<dbReference type="HPA" id="ENSG00000103966">
    <property type="expression patterns" value="Low tissue specificity"/>
</dbReference>
<dbReference type="MIM" id="605892">
    <property type="type" value="gene"/>
</dbReference>
<dbReference type="neXtProt" id="NX_Q9H223"/>
<dbReference type="OpenTargets" id="ENSG00000103966"/>
<dbReference type="PharmGKB" id="PA27680"/>
<dbReference type="VEuPathDB" id="HostDB:ENSG00000103966"/>
<dbReference type="eggNOG" id="KOG1954">
    <property type="taxonomic scope" value="Eukaryota"/>
</dbReference>
<dbReference type="GeneTree" id="ENSGT00940000158601"/>
<dbReference type="HOGENOM" id="CLU_017595_1_1_1"/>
<dbReference type="InParanoid" id="Q9H223"/>
<dbReference type="OMA" id="ISAKKEM"/>
<dbReference type="OrthoDB" id="1716625at2759"/>
<dbReference type="PAN-GO" id="Q9H223">
    <property type="GO annotations" value="10 GO annotations based on evolutionary models"/>
</dbReference>
<dbReference type="PhylomeDB" id="Q9H223"/>
<dbReference type="TreeFam" id="TF314429"/>
<dbReference type="PathwayCommons" id="Q9H223"/>
<dbReference type="SignaLink" id="Q9H223"/>
<dbReference type="BioGRID-ORCS" id="30844">
    <property type="hits" value="11 hits in 1157 CRISPR screens"/>
</dbReference>
<dbReference type="CD-CODE" id="91857CE7">
    <property type="entry name" value="Nucleolus"/>
</dbReference>
<dbReference type="CD-CODE" id="FB4E32DD">
    <property type="entry name" value="Presynaptic clusters and postsynaptic densities"/>
</dbReference>
<dbReference type="ChiTaRS" id="EHD4">
    <property type="organism name" value="human"/>
</dbReference>
<dbReference type="GeneWiki" id="EHD4"/>
<dbReference type="GenomeRNAi" id="30844"/>
<dbReference type="Pharos" id="Q9H223">
    <property type="development level" value="Tbio"/>
</dbReference>
<dbReference type="PRO" id="PR:Q9H223"/>
<dbReference type="Proteomes" id="UP000005640">
    <property type="component" value="Chromosome 15"/>
</dbReference>
<dbReference type="RNAct" id="Q9H223">
    <property type="molecule type" value="protein"/>
</dbReference>
<dbReference type="Bgee" id="ENSG00000103966">
    <property type="expression patterns" value="Expressed in heart right ventricle and 203 other cell types or tissues"/>
</dbReference>
<dbReference type="ExpressionAtlas" id="Q9H223">
    <property type="expression patterns" value="baseline and differential"/>
</dbReference>
<dbReference type="GO" id="GO:0005912">
    <property type="term" value="C:adherens junction"/>
    <property type="evidence" value="ECO:0000250"/>
    <property type="project" value="UniProt"/>
</dbReference>
<dbReference type="GO" id="GO:0005737">
    <property type="term" value="C:cytoplasm"/>
    <property type="evidence" value="ECO:0000318"/>
    <property type="project" value="GO_Central"/>
</dbReference>
<dbReference type="GO" id="GO:0005769">
    <property type="term" value="C:early endosome"/>
    <property type="evidence" value="ECO:0000318"/>
    <property type="project" value="GO_Central"/>
</dbReference>
<dbReference type="GO" id="GO:0031901">
    <property type="term" value="C:early endosome membrane"/>
    <property type="evidence" value="ECO:0007669"/>
    <property type="project" value="UniProtKB-SubCell"/>
</dbReference>
<dbReference type="GO" id="GO:0030139">
    <property type="term" value="C:endocytic vesicle"/>
    <property type="evidence" value="ECO:0000318"/>
    <property type="project" value="GO_Central"/>
</dbReference>
<dbReference type="GO" id="GO:0005783">
    <property type="term" value="C:endoplasmic reticulum"/>
    <property type="evidence" value="ECO:0000314"/>
    <property type="project" value="LIFEdb"/>
</dbReference>
<dbReference type="GO" id="GO:0070062">
    <property type="term" value="C:extracellular exosome"/>
    <property type="evidence" value="ECO:0007005"/>
    <property type="project" value="UniProtKB"/>
</dbReference>
<dbReference type="GO" id="GO:0016020">
    <property type="term" value="C:membrane"/>
    <property type="evidence" value="ECO:0007005"/>
    <property type="project" value="UniProtKB"/>
</dbReference>
<dbReference type="GO" id="GO:0005634">
    <property type="term" value="C:nucleus"/>
    <property type="evidence" value="ECO:0000304"/>
    <property type="project" value="ProtInc"/>
</dbReference>
<dbReference type="GO" id="GO:0048471">
    <property type="term" value="C:perinuclear region of cytoplasm"/>
    <property type="evidence" value="ECO:0000318"/>
    <property type="project" value="GO_Central"/>
</dbReference>
<dbReference type="GO" id="GO:0005886">
    <property type="term" value="C:plasma membrane"/>
    <property type="evidence" value="ECO:0000318"/>
    <property type="project" value="GO_Central"/>
</dbReference>
<dbReference type="GO" id="GO:0055038">
    <property type="term" value="C:recycling endosome membrane"/>
    <property type="evidence" value="ECO:0000314"/>
    <property type="project" value="UniProtKB"/>
</dbReference>
<dbReference type="GO" id="GO:0005524">
    <property type="term" value="F:ATP binding"/>
    <property type="evidence" value="ECO:0007669"/>
    <property type="project" value="UniProtKB-KW"/>
</dbReference>
<dbReference type="GO" id="GO:0045296">
    <property type="term" value="F:cadherin binding"/>
    <property type="evidence" value="ECO:0007005"/>
    <property type="project" value="BHF-UCL"/>
</dbReference>
<dbReference type="GO" id="GO:0005509">
    <property type="term" value="F:calcium ion binding"/>
    <property type="evidence" value="ECO:0007669"/>
    <property type="project" value="InterPro"/>
</dbReference>
<dbReference type="GO" id="GO:0005525">
    <property type="term" value="F:GTP binding"/>
    <property type="evidence" value="ECO:0007669"/>
    <property type="project" value="InterPro"/>
</dbReference>
<dbReference type="GO" id="GO:0003676">
    <property type="term" value="F:nucleic acid binding"/>
    <property type="evidence" value="ECO:0000304"/>
    <property type="project" value="ProtInc"/>
</dbReference>
<dbReference type="GO" id="GO:0030674">
    <property type="term" value="F:protein-macromolecule adaptor activity"/>
    <property type="evidence" value="ECO:0000250"/>
    <property type="project" value="UniProt"/>
</dbReference>
<dbReference type="GO" id="GO:0002042">
    <property type="term" value="P:cell migration involved in sprouting angiogenesis"/>
    <property type="evidence" value="ECO:0000250"/>
    <property type="project" value="UniProt"/>
</dbReference>
<dbReference type="GO" id="GO:0071363">
    <property type="term" value="P:cellular response to growth factor stimulus"/>
    <property type="evidence" value="ECO:0007669"/>
    <property type="project" value="Ensembl"/>
</dbReference>
<dbReference type="GO" id="GO:0060271">
    <property type="term" value="P:cilium assembly"/>
    <property type="evidence" value="ECO:0000318"/>
    <property type="project" value="GO_Central"/>
</dbReference>
<dbReference type="GO" id="GO:0032456">
    <property type="term" value="P:endocytic recycling"/>
    <property type="evidence" value="ECO:0000316"/>
    <property type="project" value="UniProtKB"/>
</dbReference>
<dbReference type="GO" id="GO:0006897">
    <property type="term" value="P:endocytosis"/>
    <property type="evidence" value="ECO:0000318"/>
    <property type="project" value="GO_Central"/>
</dbReference>
<dbReference type="GO" id="GO:0006907">
    <property type="term" value="P:pinocytosis"/>
    <property type="evidence" value="ECO:0007669"/>
    <property type="project" value="Ensembl"/>
</dbReference>
<dbReference type="GO" id="GO:0051260">
    <property type="term" value="P:protein homooligomerization"/>
    <property type="evidence" value="ECO:0000353"/>
    <property type="project" value="UniProtKB"/>
</dbReference>
<dbReference type="GO" id="GO:0072659">
    <property type="term" value="P:protein localization to plasma membrane"/>
    <property type="evidence" value="ECO:0000318"/>
    <property type="project" value="GO_Central"/>
</dbReference>
<dbReference type="GO" id="GO:0030100">
    <property type="term" value="P:regulation of endocytosis"/>
    <property type="evidence" value="ECO:0007669"/>
    <property type="project" value="Ensembl"/>
</dbReference>
<dbReference type="CDD" id="cd00052">
    <property type="entry name" value="EH"/>
    <property type="match status" value="1"/>
</dbReference>
<dbReference type="CDD" id="cd09913">
    <property type="entry name" value="EHD"/>
    <property type="match status" value="1"/>
</dbReference>
<dbReference type="FunFam" id="3.40.50.300:FF:000147">
    <property type="entry name" value="EH domain-containing protein 1"/>
    <property type="match status" value="1"/>
</dbReference>
<dbReference type="FunFam" id="1.10.238.10:FF:000038">
    <property type="entry name" value="EH domain-containing protein 3"/>
    <property type="match status" value="1"/>
</dbReference>
<dbReference type="Gene3D" id="1.10.268.20">
    <property type="match status" value="1"/>
</dbReference>
<dbReference type="Gene3D" id="1.10.238.10">
    <property type="entry name" value="EF-hand"/>
    <property type="match status" value="1"/>
</dbReference>
<dbReference type="Gene3D" id="3.40.50.300">
    <property type="entry name" value="P-loop containing nucleotide triphosphate hydrolases"/>
    <property type="match status" value="1"/>
</dbReference>
<dbReference type="InterPro" id="IPR040990">
    <property type="entry name" value="DUF5600"/>
</dbReference>
<dbReference type="InterPro" id="IPR045063">
    <property type="entry name" value="Dynamin_N"/>
</dbReference>
<dbReference type="InterPro" id="IPR011992">
    <property type="entry name" value="EF-hand-dom_pair"/>
</dbReference>
<dbReference type="InterPro" id="IPR018247">
    <property type="entry name" value="EF_Hand_1_Ca_BS"/>
</dbReference>
<dbReference type="InterPro" id="IPR002048">
    <property type="entry name" value="EF_hand_dom"/>
</dbReference>
<dbReference type="InterPro" id="IPR000261">
    <property type="entry name" value="EH_dom"/>
</dbReference>
<dbReference type="InterPro" id="IPR031692">
    <property type="entry name" value="EHD_N"/>
</dbReference>
<dbReference type="InterPro" id="IPR030381">
    <property type="entry name" value="G_DYNAMIN_dom"/>
</dbReference>
<dbReference type="InterPro" id="IPR027417">
    <property type="entry name" value="P-loop_NTPase"/>
</dbReference>
<dbReference type="PANTHER" id="PTHR11216:SF170">
    <property type="entry name" value="DYNAMIN ASSOCIATED PROTEIN 160, ISOFORM D"/>
    <property type="match status" value="1"/>
</dbReference>
<dbReference type="PANTHER" id="PTHR11216">
    <property type="entry name" value="EH DOMAIN"/>
    <property type="match status" value="1"/>
</dbReference>
<dbReference type="Pfam" id="PF18150">
    <property type="entry name" value="DUF5600"/>
    <property type="match status" value="1"/>
</dbReference>
<dbReference type="Pfam" id="PF00350">
    <property type="entry name" value="Dynamin_N"/>
    <property type="match status" value="1"/>
</dbReference>
<dbReference type="Pfam" id="PF12763">
    <property type="entry name" value="EH"/>
    <property type="match status" value="1"/>
</dbReference>
<dbReference type="Pfam" id="PF16880">
    <property type="entry name" value="EHD_N"/>
    <property type="match status" value="1"/>
</dbReference>
<dbReference type="SMART" id="SM00027">
    <property type="entry name" value="EH"/>
    <property type="match status" value="1"/>
</dbReference>
<dbReference type="SUPFAM" id="SSF47473">
    <property type="entry name" value="EF-hand"/>
    <property type="match status" value="1"/>
</dbReference>
<dbReference type="SUPFAM" id="SSF52540">
    <property type="entry name" value="P-loop containing nucleoside triphosphate hydrolases"/>
    <property type="match status" value="1"/>
</dbReference>
<dbReference type="PROSITE" id="PS00018">
    <property type="entry name" value="EF_HAND_1"/>
    <property type="match status" value="1"/>
</dbReference>
<dbReference type="PROSITE" id="PS50222">
    <property type="entry name" value="EF_HAND_2"/>
    <property type="match status" value="1"/>
</dbReference>
<dbReference type="PROSITE" id="PS50031">
    <property type="entry name" value="EH"/>
    <property type="match status" value="1"/>
</dbReference>
<dbReference type="PROSITE" id="PS51718">
    <property type="entry name" value="G_DYNAMIN_2"/>
    <property type="match status" value="1"/>
</dbReference>
<gene>
    <name evidence="14" type="primary">EHD4</name>
    <name evidence="11" type="synonym">HCA10</name>
    <name evidence="11" type="synonym">HCA11</name>
    <name evidence="14" type="synonym">PAST4</name>
    <name evidence="13" type="ORF">FKSG7</name>
</gene>
<feature type="chain" id="PRO_0000146114" description="EH domain-containing protein 4">
    <location>
        <begin position="1"/>
        <end position="541"/>
    </location>
</feature>
<feature type="domain" description="Dynamin-type G" evidence="7">
    <location>
        <begin position="58"/>
        <end position="289"/>
    </location>
</feature>
<feature type="domain" description="EH" evidence="5">
    <location>
        <begin position="447"/>
        <end position="535"/>
    </location>
</feature>
<feature type="domain" description="EF-hand" evidence="6">
    <location>
        <begin position="479"/>
        <end position="514"/>
    </location>
</feature>
<feature type="region of interest" description="G1 motif" evidence="7">
    <location>
        <begin position="68"/>
        <end position="75"/>
    </location>
</feature>
<feature type="region of interest" description="G2 motif" evidence="7">
    <location>
        <begin position="94"/>
        <end position="95"/>
    </location>
</feature>
<feature type="region of interest" description="G3 motif" evidence="7">
    <location>
        <begin position="156"/>
        <end position="159"/>
    </location>
</feature>
<feature type="region of interest" description="G4 motif" evidence="7">
    <location>
        <begin position="222"/>
        <end position="225"/>
    </location>
</feature>
<feature type="region of interest" description="G5 motif" evidence="7">
    <location>
        <position position="246"/>
    </location>
</feature>
<feature type="binding site" evidence="1">
    <location>
        <begin position="68"/>
        <end position="75"/>
    </location>
    <ligand>
        <name>ATP</name>
        <dbReference type="ChEBI" id="CHEBI:30616"/>
    </ligand>
</feature>
<feature type="binding site" evidence="1">
    <location>
        <position position="223"/>
    </location>
    <ligand>
        <name>ATP</name>
        <dbReference type="ChEBI" id="CHEBI:30616"/>
    </ligand>
</feature>
<feature type="binding site" evidence="1">
    <location>
        <position position="261"/>
    </location>
    <ligand>
        <name>ATP</name>
        <dbReference type="ChEBI" id="CHEBI:30616"/>
    </ligand>
</feature>
<feature type="binding site" evidence="6">
    <location>
        <position position="492"/>
    </location>
    <ligand>
        <name>Ca(2+)</name>
        <dbReference type="ChEBI" id="CHEBI:29108"/>
    </ligand>
</feature>
<feature type="binding site" evidence="6">
    <location>
        <position position="494"/>
    </location>
    <ligand>
        <name>Ca(2+)</name>
        <dbReference type="ChEBI" id="CHEBI:29108"/>
    </ligand>
</feature>
<feature type="binding site" evidence="6">
    <location>
        <position position="496"/>
    </location>
    <ligand>
        <name>Ca(2+)</name>
        <dbReference type="ChEBI" id="CHEBI:29108"/>
    </ligand>
</feature>
<feature type="binding site" evidence="6">
    <location>
        <position position="498"/>
    </location>
    <ligand>
        <name>Ca(2+)</name>
        <dbReference type="ChEBI" id="CHEBI:29108"/>
    </ligand>
</feature>
<feature type="binding site" evidence="6">
    <location>
        <position position="503"/>
    </location>
    <ligand>
        <name>Ca(2+)</name>
        <dbReference type="ChEBI" id="CHEBI:29108"/>
    </ligand>
</feature>
<feature type="modified residue" description="N-acetylmethionine" evidence="3">
    <location>
        <position position="1"/>
    </location>
</feature>
<feature type="modified residue" description="Phosphoserine" evidence="18">
    <location>
        <position position="162"/>
    </location>
</feature>
<feature type="modified residue" description="Phosphotyrosine" evidence="15">
    <location>
        <position position="451"/>
    </location>
</feature>
<feature type="modified residue" description="Phosphoserine" evidence="16 17 18">
    <location>
        <position position="459"/>
    </location>
</feature>
<feature type="sequence variant" id="VAR_053070" description="In dbSNP:rs11549015.">
    <original>V</original>
    <variation>I</variation>
    <location>
        <position position="154"/>
    </location>
</feature>
<feature type="sequence conflict" description="In Ref. 2; AAG28784." evidence="12" ref="2">
    <original>L</original>
    <variation>I</variation>
    <location>
        <position position="297"/>
    </location>
</feature>
<feature type="sequence conflict" description="In Ref. 2; AAG28784." evidence="12" ref="2">
    <original>TEGPFNQGYGEGA</original>
    <variation>PRAPSTRATGRVP</variation>
    <location>
        <begin position="421"/>
        <end position="433"/>
    </location>
</feature>
<feature type="sequence conflict" description="In Ref. 2; AAG28784." evidence="12" ref="2">
    <original>E</original>
    <variation>Q</variation>
    <location>
        <position position="439"/>
    </location>
</feature>
<comment type="function">
    <text evidence="2 9 10">ATP- and membrane-binding protein that probably controls membrane reorganization/tubulation upon ATP hydrolysis. Plays a role in early endosomal transport (PubMed:17233914, PubMed:18331452). During sprouting angiogenesis, in complex with PACSIN2 and MICALL1, forms recycling endosome-like tubular structure at asymmetric adherens junctions to control CDH5 trafficking (By similarity).</text>
</comment>
<comment type="subunit">
    <text evidence="2 9">Homooligomer, and heterooligomer with EHD1, EHD2 and EHD3 (PubMed:17233914). Forms a complex with EHD4 and MICALL1; the complex controls CDH5 trafficking and coordinates angiogenesis (By similarity).</text>
</comment>
<comment type="interaction">
    <interactant intactId="EBI-1050573">
        <id>Q9H223</id>
    </interactant>
    <interactant intactId="EBI-1056885">
        <id>Q8N3F8</id>
        <label>MICALL1</label>
    </interactant>
    <organismsDiffer>false</organismsDiffer>
    <experiments>2</experiments>
</comment>
<comment type="subcellular location">
    <subcellularLocation>
        <location evidence="10">Early endosome membrane</location>
        <topology evidence="12">Peripheral membrane protein</topology>
        <orientation evidence="12">Cytoplasmic side</orientation>
    </subcellularLocation>
    <subcellularLocation>
        <location evidence="10">Recycling endosome membrane</location>
        <topology evidence="12">Peripheral membrane protein</topology>
        <orientation evidence="12">Cytoplasmic side</orientation>
    </subcellularLocation>
    <subcellularLocation>
        <location evidence="2">Cell membrane</location>
        <topology evidence="12">Peripheral membrane protein</topology>
        <orientation evidence="12">Cytoplasmic side</orientation>
    </subcellularLocation>
    <subcellularLocation>
        <location evidence="2">Cell junction</location>
        <location evidence="2">Adherens junction</location>
    </subcellularLocation>
</comment>
<comment type="tissue specificity">
    <text evidence="8">Highly expressed in pancreas and heart.</text>
</comment>
<comment type="domain">
    <text evidence="4">The EH domain interacts with Asn-Pro-Phe (NPF) motifs of target proteins.</text>
</comment>
<comment type="similarity">
    <text evidence="7">Belongs to the TRAFAC class dynamin-like GTPase superfamily. Dynamin/Fzo/YdjA family. EHD subfamily.</text>
</comment>
<protein>
    <recommendedName>
        <fullName evidence="12">EH domain-containing protein 4</fullName>
    </recommendedName>
    <alternativeName>
        <fullName evidence="11">Hepatocellular carcinoma-associated protein 10/11</fullName>
    </alternativeName>
    <alternativeName>
        <fullName evidence="12">PAST homolog 4</fullName>
    </alternativeName>
</protein>
<proteinExistence type="evidence at protein level"/>
<sequence>MFSWMGRQAGGRERAGGADAVQTVTGGLRSLYLRKVLPLEEAYRFHEFHSPALEDADFENKPMILLVGQYSTGKTTFIRYLLEQDFPGMRIGPEPTTDSFIAVMYGETEGSTPGNALVVDPKKPFRKLSRFGNAFLNRFMCSQLPNQVLKSISVIDSPGILSGEKQRISRGYDFCQVLQWFAERVDRIILLFDAHKLDISDEFSEAIKAFRGQDDKIRVVLNKADQVDTQQLMRVYGALMWSLGKVINTPEVLRVYIGSFWAQPLQNTDNRRLFEAEAQDLFRDIQSLPQKAAVRKLNDLIKRARLAKVHAYIISYLKKEMPSVFGKENKKRELISRLPEIYIQLQREYQISAGDFPEVKAMQEQLENYDFTKFHSLKPKLIEAVDNMLSNKISPLMNLISQEETSTPTQLVQGGAFDGTTEGPFNQGYGEGAKEGADEEEWVVAKDKPVYDELFYTLSPINGKISGVNAKKEMVTSKLPNSVLGKIWKLADCDCDGMLDEEEFALAKHLIKIKLDGYELPSSLPPHLVPPSHRKSLPKAD</sequence>
<accession>Q9H223</accession>
<accession>Q9HAR1</accession>
<accession>Q9NZN2</accession>
<reference key="1">
    <citation type="journal article" date="2002" name="J. Immunol.">
        <title>Large scale identification of human hepatocellular carcinoma-associated antigens by autoantibodies.</title>
        <authorList>
            <person name="Wang Y."/>
            <person name="Han K.-J."/>
            <person name="Pang X.-W."/>
            <person name="Vaughan H.A."/>
            <person name="Qu W."/>
            <person name="Dong X.-Y."/>
            <person name="Peng J.-R."/>
            <person name="Zhao H.-T."/>
            <person name="Rui J.-A."/>
            <person name="Leng X.-S."/>
            <person name="Cebon J."/>
            <person name="Burgess A.W."/>
            <person name="Chen W.-F."/>
        </authorList>
    </citation>
    <scope>NUCLEOTIDE SEQUENCE [MRNA]</scope>
    <source>
        <tissue>Hepatoma</tissue>
    </source>
</reference>
<reference key="2">
    <citation type="submission" date="2000-09" db="EMBL/GenBank/DDBJ databases">
        <title>Cloning of FKSG7, a novel gene which encodes an EH domain-containing protein.</title>
        <authorList>
            <person name="Wang Y.-G."/>
        </authorList>
    </citation>
    <scope>NUCLEOTIDE SEQUENCE [MRNA]</scope>
    <source>
        <tissue>Brain</tissue>
    </source>
</reference>
<reference key="3">
    <citation type="submission" date="2001-12" db="EMBL/GenBank/DDBJ databases">
        <title>hEHD4, an EH domain containing protein-4.</title>
        <authorList>
            <person name="Benjamin S."/>
            <person name="Horowitz M."/>
        </authorList>
    </citation>
    <scope>NUCLEOTIDE SEQUENCE [MRNA]</scope>
</reference>
<reference key="4">
    <citation type="journal article" date="2004" name="Genome Res.">
        <title>The status, quality, and expansion of the NIH full-length cDNA project: the Mammalian Gene Collection (MGC).</title>
        <authorList>
            <consortium name="The MGC Project Team"/>
        </authorList>
    </citation>
    <scope>NUCLEOTIDE SEQUENCE [LARGE SCALE MRNA]</scope>
    <source>
        <tissue>Brain</tissue>
        <tissue>Placenta</tissue>
    </source>
</reference>
<reference key="5">
    <citation type="journal article" date="2000" name="Genomics">
        <title>EHD2, EHD3, and EHD4 encode novel members of a highly conserved family of EH domain-containing proteins.</title>
        <authorList>
            <person name="Pohl U."/>
            <person name="Smith J.S."/>
            <person name="Tachibana I."/>
            <person name="Ueki K."/>
            <person name="Lee H.K."/>
            <person name="Ramaswamy S."/>
            <person name="Wu Q."/>
            <person name="Mohrenweiser H.W."/>
            <person name="Jenkins R.B."/>
            <person name="Louis D.N."/>
        </authorList>
    </citation>
    <scope>NUCLEOTIDE SEQUENCE [MRNA] OF 60-541</scope>
    <scope>TISSUE SPECIFICITY</scope>
    <source>
        <tissue>Brain</tissue>
    </source>
</reference>
<reference key="6">
    <citation type="journal article" date="2005" name="Nat. Biotechnol.">
        <title>Immunoaffinity profiling of tyrosine phosphorylation in cancer cells.</title>
        <authorList>
            <person name="Rush J."/>
            <person name="Moritz A."/>
            <person name="Lee K.A."/>
            <person name="Guo A."/>
            <person name="Goss V.L."/>
            <person name="Spek E.J."/>
            <person name="Zhang H."/>
            <person name="Zha X.-M."/>
            <person name="Polakiewicz R.D."/>
            <person name="Comb M.J."/>
        </authorList>
    </citation>
    <scope>PHOSPHORYLATION [LARGE SCALE ANALYSIS] AT TYR-451</scope>
    <scope>IDENTIFICATION BY MASS SPECTROMETRY [LARGE SCALE ANALYSIS]</scope>
</reference>
<reference key="7">
    <citation type="journal article" date="2006" name="Cell">
        <title>Global, in vivo, and site-specific phosphorylation dynamics in signaling networks.</title>
        <authorList>
            <person name="Olsen J.V."/>
            <person name="Blagoev B."/>
            <person name="Gnad F."/>
            <person name="Macek B."/>
            <person name="Kumar C."/>
            <person name="Mortensen P."/>
            <person name="Mann M."/>
        </authorList>
    </citation>
    <scope>IDENTIFICATION BY MASS SPECTROMETRY [LARGE SCALE ANALYSIS]</scope>
    <source>
        <tissue>Cervix carcinoma</tissue>
    </source>
</reference>
<reference key="8">
    <citation type="journal article" date="2007" name="BMC Cell Biol.">
        <title>Shared as well as distinct roles of EHD proteins revealed by biochemical and functional comparisons in mammalian cells and C. elegans.</title>
        <authorList>
            <person name="George M."/>
            <person name="Ying G."/>
            <person name="Rainey M.A."/>
            <person name="Solomon A."/>
            <person name="Parikh P.T."/>
            <person name="Gao Q."/>
            <person name="Band V."/>
            <person name="Band H."/>
        </authorList>
    </citation>
    <scope>FUNCTION</scope>
    <scope>SUBUNIT</scope>
</reference>
<reference key="9">
    <citation type="journal article" date="2008" name="Proc. Natl. Acad. Sci. U.S.A.">
        <title>A quantitative atlas of mitotic phosphorylation.</title>
        <authorList>
            <person name="Dephoure N."/>
            <person name="Zhou C."/>
            <person name="Villen J."/>
            <person name="Beausoleil S.A."/>
            <person name="Bakalarski C.E."/>
            <person name="Elledge S.J."/>
            <person name="Gygi S.P."/>
        </authorList>
    </citation>
    <scope>PHOSPHORYLATION [LARGE SCALE ANALYSIS] AT SER-459</scope>
    <scope>IDENTIFICATION BY MASS SPECTROMETRY [LARGE SCALE ANALYSIS]</scope>
    <source>
        <tissue>Cervix carcinoma</tissue>
    </source>
</reference>
<reference key="10">
    <citation type="journal article" date="2008" name="Traffic">
        <title>A role for EHD4 in the regulation of early endosomal transport.</title>
        <authorList>
            <person name="Sharma M."/>
            <person name="Naslavsky N."/>
            <person name="Caplan S."/>
        </authorList>
    </citation>
    <scope>FUNCTION</scope>
    <scope>INTERACTION WITH EHD1 AND EHD3</scope>
    <scope>SUBCELLULAR LOCATION</scope>
</reference>
<reference key="11">
    <citation type="journal article" date="2010" name="Sci. Signal.">
        <title>Quantitative phosphoproteomics reveals widespread full phosphorylation site occupancy during mitosis.</title>
        <authorList>
            <person name="Olsen J.V."/>
            <person name="Vermeulen M."/>
            <person name="Santamaria A."/>
            <person name="Kumar C."/>
            <person name="Miller M.L."/>
            <person name="Jensen L.J."/>
            <person name="Gnad F."/>
            <person name="Cox J."/>
            <person name="Jensen T.S."/>
            <person name="Nigg E.A."/>
            <person name="Brunak S."/>
            <person name="Mann M."/>
        </authorList>
    </citation>
    <scope>PHOSPHORYLATION [LARGE SCALE ANALYSIS] AT SER-459</scope>
    <scope>IDENTIFICATION BY MASS SPECTROMETRY [LARGE SCALE ANALYSIS]</scope>
    <source>
        <tissue>Cervix carcinoma</tissue>
    </source>
</reference>
<reference key="12">
    <citation type="journal article" date="2011" name="BMC Syst. Biol.">
        <title>Initial characterization of the human central proteome.</title>
        <authorList>
            <person name="Burkard T.R."/>
            <person name="Planyavsky M."/>
            <person name="Kaupe I."/>
            <person name="Breitwieser F.P."/>
            <person name="Buerckstuemmer T."/>
            <person name="Bennett K.L."/>
            <person name="Superti-Furga G."/>
            <person name="Colinge J."/>
        </authorList>
    </citation>
    <scope>IDENTIFICATION BY MASS SPECTROMETRY [LARGE SCALE ANALYSIS]</scope>
</reference>
<reference key="13">
    <citation type="journal article" date="2013" name="J. Proteome Res.">
        <title>Toward a comprehensive characterization of a human cancer cell phosphoproteome.</title>
        <authorList>
            <person name="Zhou H."/>
            <person name="Di Palma S."/>
            <person name="Preisinger C."/>
            <person name="Peng M."/>
            <person name="Polat A.N."/>
            <person name="Heck A.J."/>
            <person name="Mohammed S."/>
        </authorList>
    </citation>
    <scope>PHOSPHORYLATION [LARGE SCALE ANALYSIS] AT SER-162 AND SER-459</scope>
    <scope>IDENTIFICATION BY MASS SPECTROMETRY [LARGE SCALE ANALYSIS]</scope>
    <source>
        <tissue>Cervix carcinoma</tissue>
        <tissue>Erythroleukemia</tissue>
    </source>
</reference>
<reference key="14">
    <citation type="journal article" date="2014" name="J. Proteomics">
        <title>An enzyme assisted RP-RPLC approach for in-depth analysis of human liver phosphoproteome.</title>
        <authorList>
            <person name="Bian Y."/>
            <person name="Song C."/>
            <person name="Cheng K."/>
            <person name="Dong M."/>
            <person name="Wang F."/>
            <person name="Huang J."/>
            <person name="Sun D."/>
            <person name="Wang L."/>
            <person name="Ye M."/>
            <person name="Zou H."/>
        </authorList>
    </citation>
    <scope>IDENTIFICATION BY MASS SPECTROMETRY [LARGE SCALE ANALYSIS]</scope>
    <source>
        <tissue>Liver</tissue>
    </source>
</reference>
<reference key="15">
    <citation type="journal article" date="2015" name="Proteomics">
        <title>N-terminome analysis of the human mitochondrial proteome.</title>
        <authorList>
            <person name="Vaca Jacome A.S."/>
            <person name="Rabilloud T."/>
            <person name="Schaeffer-Reiss C."/>
            <person name="Rompais M."/>
            <person name="Ayoub D."/>
            <person name="Lane L."/>
            <person name="Bairoch A."/>
            <person name="Van Dorsselaer A."/>
            <person name="Carapito C."/>
        </authorList>
    </citation>
    <scope>IDENTIFICATION BY MASS SPECTROMETRY [LARGE SCALE ANALYSIS]</scope>
</reference>
<evidence type="ECO:0000250" key="1">
    <source>
        <dbReference type="UniProtKB" id="Q8BH64"/>
    </source>
</evidence>
<evidence type="ECO:0000250" key="2">
    <source>
        <dbReference type="UniProtKB" id="Q9EQP2"/>
    </source>
</evidence>
<evidence type="ECO:0000250" key="3">
    <source>
        <dbReference type="UniProtKB" id="Q9H4M9"/>
    </source>
</evidence>
<evidence type="ECO:0000250" key="4">
    <source>
        <dbReference type="UniProtKB" id="Q9WVK4"/>
    </source>
</evidence>
<evidence type="ECO:0000255" key="5">
    <source>
        <dbReference type="PROSITE-ProRule" id="PRU00077"/>
    </source>
</evidence>
<evidence type="ECO:0000255" key="6">
    <source>
        <dbReference type="PROSITE-ProRule" id="PRU00448"/>
    </source>
</evidence>
<evidence type="ECO:0000255" key="7">
    <source>
        <dbReference type="PROSITE-ProRule" id="PRU01055"/>
    </source>
</evidence>
<evidence type="ECO:0000269" key="8">
    <source>
    </source>
</evidence>
<evidence type="ECO:0000269" key="9">
    <source>
    </source>
</evidence>
<evidence type="ECO:0000269" key="10">
    <source>
    </source>
</evidence>
<evidence type="ECO:0000303" key="11">
    <source>
    </source>
</evidence>
<evidence type="ECO:0000305" key="12"/>
<evidence type="ECO:0000312" key="13">
    <source>
        <dbReference type="EMBL" id="AAG28784.1"/>
    </source>
</evidence>
<evidence type="ECO:0000312" key="14">
    <source>
        <dbReference type="HGNC" id="HGNC:3245"/>
    </source>
</evidence>
<evidence type="ECO:0007744" key="15">
    <source>
    </source>
</evidence>
<evidence type="ECO:0007744" key="16">
    <source>
    </source>
</evidence>
<evidence type="ECO:0007744" key="17">
    <source>
    </source>
</evidence>
<evidence type="ECO:0007744" key="18">
    <source>
    </source>
</evidence>
<name>EHD4_HUMAN</name>
<organism>
    <name type="scientific">Homo sapiens</name>
    <name type="common">Human</name>
    <dbReference type="NCBI Taxonomy" id="9606"/>
    <lineage>
        <taxon>Eukaryota</taxon>
        <taxon>Metazoa</taxon>
        <taxon>Chordata</taxon>
        <taxon>Craniata</taxon>
        <taxon>Vertebrata</taxon>
        <taxon>Euteleostomi</taxon>
        <taxon>Mammalia</taxon>
        <taxon>Eutheria</taxon>
        <taxon>Euarchontoglires</taxon>
        <taxon>Primates</taxon>
        <taxon>Haplorrhini</taxon>
        <taxon>Catarrhini</taxon>
        <taxon>Hominidae</taxon>
        <taxon>Homo</taxon>
    </lineage>
</organism>
<keyword id="KW-0007">Acetylation</keyword>
<keyword id="KW-0067">ATP-binding</keyword>
<keyword id="KW-0106">Calcium</keyword>
<keyword id="KW-0965">Cell junction</keyword>
<keyword id="KW-1003">Cell membrane</keyword>
<keyword id="KW-0967">Endosome</keyword>
<keyword id="KW-0472">Membrane</keyword>
<keyword id="KW-0479">Metal-binding</keyword>
<keyword id="KW-0547">Nucleotide-binding</keyword>
<keyword id="KW-0597">Phosphoprotein</keyword>
<keyword id="KW-1267">Proteomics identification</keyword>
<keyword id="KW-1185">Reference proteome</keyword>